<accession>B5F613</accession>
<proteinExistence type="inferred from homology"/>
<organism>
    <name type="scientific">Salmonella agona (strain SL483)</name>
    <dbReference type="NCBI Taxonomy" id="454166"/>
    <lineage>
        <taxon>Bacteria</taxon>
        <taxon>Pseudomonadati</taxon>
        <taxon>Pseudomonadota</taxon>
        <taxon>Gammaproteobacteria</taxon>
        <taxon>Enterobacterales</taxon>
        <taxon>Enterobacteriaceae</taxon>
        <taxon>Salmonella</taxon>
    </lineage>
</organism>
<gene>
    <name evidence="1" type="primary">sotB</name>
    <name type="ordered locus">SeAg_B1648</name>
</gene>
<sequence>MTINPVSRKVAWLRVVTLAIAAFIFNTTEFVPVGLLSDIAESFHMQTAQVGIMLTIYAWVVAVMSLPFMLLTSQMERRKLLICLFVLFIASHVLSFLAWNFTVLVISRIGIAFAHAIFWSITASLAIRLAPAGKRAQALSLIATGTALAMVLGLPIGRVVGQYFGWRTTFFAIGMGALITLLCLIKLLPKLPSEHSGSLKSLPLLFRRPALMSLYVLTVVVVTAHYTAYSYIEPFVQNVAGLSANFATVLLLILGGAGIIGSLVFGKLGNRHASSLVSIAIALLVVCLLLLLPAADSEAHLAILSIFWGIAIMVIGLGMQVKVLALAPDATDVAMALFSGIFNIGIGAGALVGNQVSLHWSMSAIGYIGAIPACAALVWAVLIFRKWPVTLEEQPH</sequence>
<name>SOTB_SALA4</name>
<keyword id="KW-0997">Cell inner membrane</keyword>
<keyword id="KW-1003">Cell membrane</keyword>
<keyword id="KW-0472">Membrane</keyword>
<keyword id="KW-0762">Sugar transport</keyword>
<keyword id="KW-0812">Transmembrane</keyword>
<keyword id="KW-1133">Transmembrane helix</keyword>
<keyword id="KW-0813">Transport</keyword>
<dbReference type="EMBL" id="CP001138">
    <property type="protein sequence ID" value="ACH48490.1"/>
    <property type="molecule type" value="Genomic_DNA"/>
</dbReference>
<dbReference type="RefSeq" id="WP_000154617.1">
    <property type="nucleotide sequence ID" value="NC_011149.1"/>
</dbReference>
<dbReference type="SMR" id="B5F613"/>
<dbReference type="KEGG" id="sea:SeAg_B1648"/>
<dbReference type="HOGENOM" id="CLU_001265_61_2_6"/>
<dbReference type="Proteomes" id="UP000008819">
    <property type="component" value="Chromosome"/>
</dbReference>
<dbReference type="GO" id="GO:0005886">
    <property type="term" value="C:plasma membrane"/>
    <property type="evidence" value="ECO:0007669"/>
    <property type="project" value="UniProtKB-SubCell"/>
</dbReference>
<dbReference type="GO" id="GO:0015144">
    <property type="term" value="F:carbohydrate transmembrane transporter activity"/>
    <property type="evidence" value="ECO:0007669"/>
    <property type="project" value="UniProtKB-UniRule"/>
</dbReference>
<dbReference type="CDD" id="cd17324">
    <property type="entry name" value="MFS_NepI_like"/>
    <property type="match status" value="1"/>
</dbReference>
<dbReference type="Gene3D" id="1.20.1250.20">
    <property type="entry name" value="MFS general substrate transporter like domains"/>
    <property type="match status" value="1"/>
</dbReference>
<dbReference type="HAMAP" id="MF_00517">
    <property type="entry name" value="MFS_SotB"/>
    <property type="match status" value="1"/>
</dbReference>
<dbReference type="InterPro" id="IPR011701">
    <property type="entry name" value="MFS"/>
</dbReference>
<dbReference type="InterPro" id="IPR020846">
    <property type="entry name" value="MFS_dom"/>
</dbReference>
<dbReference type="InterPro" id="IPR050189">
    <property type="entry name" value="MFS_Efflux_Transporters"/>
</dbReference>
<dbReference type="InterPro" id="IPR036259">
    <property type="entry name" value="MFS_trans_sf"/>
</dbReference>
<dbReference type="InterPro" id="IPR023495">
    <property type="entry name" value="Sugar_effux_transptr_put"/>
</dbReference>
<dbReference type="NCBIfam" id="NF002921">
    <property type="entry name" value="PRK03545.1"/>
    <property type="match status" value="1"/>
</dbReference>
<dbReference type="PANTHER" id="PTHR43124">
    <property type="entry name" value="PURINE EFFLUX PUMP PBUE"/>
    <property type="match status" value="1"/>
</dbReference>
<dbReference type="PANTHER" id="PTHR43124:SF4">
    <property type="entry name" value="SUGAR EFFLUX TRANSPORTER"/>
    <property type="match status" value="1"/>
</dbReference>
<dbReference type="Pfam" id="PF07690">
    <property type="entry name" value="MFS_1"/>
    <property type="match status" value="1"/>
</dbReference>
<dbReference type="SUPFAM" id="SSF103473">
    <property type="entry name" value="MFS general substrate transporter"/>
    <property type="match status" value="1"/>
</dbReference>
<dbReference type="PROSITE" id="PS50850">
    <property type="entry name" value="MFS"/>
    <property type="match status" value="1"/>
</dbReference>
<reference key="1">
    <citation type="journal article" date="2011" name="J. Bacteriol.">
        <title>Comparative genomics of 28 Salmonella enterica isolates: evidence for CRISPR-mediated adaptive sublineage evolution.</title>
        <authorList>
            <person name="Fricke W.F."/>
            <person name="Mammel M.K."/>
            <person name="McDermott P.F."/>
            <person name="Tartera C."/>
            <person name="White D.G."/>
            <person name="Leclerc J.E."/>
            <person name="Ravel J."/>
            <person name="Cebula T.A."/>
        </authorList>
    </citation>
    <scope>NUCLEOTIDE SEQUENCE [LARGE SCALE GENOMIC DNA]</scope>
    <source>
        <strain>SL483</strain>
    </source>
</reference>
<feature type="chain" id="PRO_1000127469" description="Probable sugar efflux transporter">
    <location>
        <begin position="1"/>
        <end position="396"/>
    </location>
</feature>
<feature type="transmembrane region" description="Helical" evidence="1">
    <location>
        <begin position="15"/>
        <end position="35"/>
    </location>
</feature>
<feature type="transmembrane region" description="Helical" evidence="1">
    <location>
        <begin position="50"/>
        <end position="70"/>
    </location>
</feature>
<feature type="transmembrane region" description="Helical" evidence="1">
    <location>
        <begin position="81"/>
        <end position="101"/>
    </location>
</feature>
<feature type="transmembrane region" description="Helical" evidence="1">
    <location>
        <begin position="103"/>
        <end position="123"/>
    </location>
</feature>
<feature type="transmembrane region" description="Helical" evidence="1">
    <location>
        <begin position="136"/>
        <end position="156"/>
    </location>
</feature>
<feature type="transmembrane region" description="Helical" evidence="1">
    <location>
        <begin position="169"/>
        <end position="189"/>
    </location>
</feature>
<feature type="transmembrane region" description="Helical" evidence="1">
    <location>
        <begin position="209"/>
        <end position="229"/>
    </location>
</feature>
<feature type="transmembrane region" description="Helical" evidence="1">
    <location>
        <begin position="246"/>
        <end position="266"/>
    </location>
</feature>
<feature type="transmembrane region" description="Helical" evidence="1">
    <location>
        <begin position="275"/>
        <end position="295"/>
    </location>
</feature>
<feature type="transmembrane region" description="Helical" evidence="1">
    <location>
        <begin position="301"/>
        <end position="321"/>
    </location>
</feature>
<feature type="transmembrane region" description="Helical" evidence="1">
    <location>
        <begin position="333"/>
        <end position="353"/>
    </location>
</feature>
<feature type="transmembrane region" description="Helical" evidence="1">
    <location>
        <begin position="364"/>
        <end position="384"/>
    </location>
</feature>
<protein>
    <recommendedName>
        <fullName evidence="1">Probable sugar efflux transporter</fullName>
    </recommendedName>
</protein>
<comment type="function">
    <text evidence="1">Involved in the efflux of sugars. The physiological role may be the reduction of the intracellular concentration of toxic sugars or sugar metabolites.</text>
</comment>
<comment type="subcellular location">
    <subcellularLocation>
        <location evidence="1">Cell inner membrane</location>
        <topology evidence="1">Multi-pass membrane protein</topology>
    </subcellularLocation>
</comment>
<comment type="similarity">
    <text evidence="1">Belongs to the major facilitator superfamily. SotB (TC 2.A.1.2) family.</text>
</comment>
<evidence type="ECO:0000255" key="1">
    <source>
        <dbReference type="HAMAP-Rule" id="MF_00517"/>
    </source>
</evidence>